<gene>
    <name evidence="1" type="primary">btsR</name>
    <name type="synonym">yehT</name>
    <name type="ordered locus">STM2158</name>
</gene>
<comment type="function">
    <text evidence="1">Member of the two-component regulatory system BtsS/BtsR. BtsR regulates expression of btsT by binding to its promoter region.</text>
</comment>
<comment type="PTM">
    <text evidence="1">Phosphorylated by BtsS.</text>
</comment>
<dbReference type="EMBL" id="AE006468">
    <property type="protein sequence ID" value="AAL21062.1"/>
    <property type="molecule type" value="Genomic_DNA"/>
</dbReference>
<dbReference type="RefSeq" id="NP_461103.1">
    <property type="nucleotide sequence ID" value="NC_003197.2"/>
</dbReference>
<dbReference type="RefSeq" id="WP_000598637.1">
    <property type="nucleotide sequence ID" value="NC_003197.2"/>
</dbReference>
<dbReference type="SMR" id="Q8ZNN2"/>
<dbReference type="STRING" id="99287.STM2158"/>
<dbReference type="PaxDb" id="99287-STM2158"/>
<dbReference type="GeneID" id="1253680"/>
<dbReference type="KEGG" id="stm:STM2158"/>
<dbReference type="PATRIC" id="fig|99287.12.peg.2284"/>
<dbReference type="HOGENOM" id="CLU_000445_14_1_6"/>
<dbReference type="OMA" id="PLIRCHR"/>
<dbReference type="PhylomeDB" id="Q8ZNN2"/>
<dbReference type="BioCyc" id="SENT99287:STM2158-MONOMER"/>
<dbReference type="Proteomes" id="UP000001014">
    <property type="component" value="Chromosome"/>
</dbReference>
<dbReference type="GO" id="GO:0005829">
    <property type="term" value="C:cytosol"/>
    <property type="evidence" value="ECO:0000318"/>
    <property type="project" value="GO_Central"/>
</dbReference>
<dbReference type="GO" id="GO:0032993">
    <property type="term" value="C:protein-DNA complex"/>
    <property type="evidence" value="ECO:0000318"/>
    <property type="project" value="GO_Central"/>
</dbReference>
<dbReference type="GO" id="GO:0000156">
    <property type="term" value="F:phosphorelay response regulator activity"/>
    <property type="evidence" value="ECO:0000318"/>
    <property type="project" value="GO_Central"/>
</dbReference>
<dbReference type="GO" id="GO:0000976">
    <property type="term" value="F:transcription cis-regulatory region binding"/>
    <property type="evidence" value="ECO:0000318"/>
    <property type="project" value="GO_Central"/>
</dbReference>
<dbReference type="GO" id="GO:0006355">
    <property type="term" value="P:regulation of DNA-templated transcription"/>
    <property type="evidence" value="ECO:0000318"/>
    <property type="project" value="GO_Central"/>
</dbReference>
<dbReference type="CDD" id="cd17532">
    <property type="entry name" value="REC_LytTR_AlgR-like"/>
    <property type="match status" value="1"/>
</dbReference>
<dbReference type="FunFam" id="2.40.50.1020:FF:000001">
    <property type="entry name" value="Two-component response regulator yehT"/>
    <property type="match status" value="1"/>
</dbReference>
<dbReference type="FunFam" id="3.40.50.2300:FF:000051">
    <property type="entry name" value="Two-component response regulator yehT"/>
    <property type="match status" value="1"/>
</dbReference>
<dbReference type="Gene3D" id="3.40.50.2300">
    <property type="match status" value="1"/>
</dbReference>
<dbReference type="Gene3D" id="2.40.50.1020">
    <property type="entry name" value="LytTr DNA-binding domain"/>
    <property type="match status" value="1"/>
</dbReference>
<dbReference type="InterPro" id="IPR011006">
    <property type="entry name" value="CheY-like_superfamily"/>
</dbReference>
<dbReference type="InterPro" id="IPR046947">
    <property type="entry name" value="LytR-like"/>
</dbReference>
<dbReference type="InterPro" id="IPR007492">
    <property type="entry name" value="LytTR_DNA-bd_dom"/>
</dbReference>
<dbReference type="InterPro" id="IPR001789">
    <property type="entry name" value="Sig_transdc_resp-reg_receiver"/>
</dbReference>
<dbReference type="NCBIfam" id="NF008677">
    <property type="entry name" value="PRK11697.1"/>
    <property type="match status" value="1"/>
</dbReference>
<dbReference type="PANTHER" id="PTHR37299:SF1">
    <property type="entry name" value="STAGE 0 SPORULATION PROTEIN A HOMOLOG"/>
    <property type="match status" value="1"/>
</dbReference>
<dbReference type="PANTHER" id="PTHR37299">
    <property type="entry name" value="TRANSCRIPTIONAL REGULATOR-RELATED"/>
    <property type="match status" value="1"/>
</dbReference>
<dbReference type="Pfam" id="PF04397">
    <property type="entry name" value="LytTR"/>
    <property type="match status" value="1"/>
</dbReference>
<dbReference type="Pfam" id="PF00072">
    <property type="entry name" value="Response_reg"/>
    <property type="match status" value="1"/>
</dbReference>
<dbReference type="SMART" id="SM00850">
    <property type="entry name" value="LytTR"/>
    <property type="match status" value="1"/>
</dbReference>
<dbReference type="SMART" id="SM00448">
    <property type="entry name" value="REC"/>
    <property type="match status" value="1"/>
</dbReference>
<dbReference type="SUPFAM" id="SSF52172">
    <property type="entry name" value="CheY-like"/>
    <property type="match status" value="1"/>
</dbReference>
<dbReference type="PROSITE" id="PS50930">
    <property type="entry name" value="HTH_LYTTR"/>
    <property type="match status" value="1"/>
</dbReference>
<dbReference type="PROSITE" id="PS50110">
    <property type="entry name" value="RESPONSE_REGULATORY"/>
    <property type="match status" value="1"/>
</dbReference>
<proteinExistence type="inferred from homology"/>
<sequence length="239" mass="27410">MIKVLIVDDEPLARENLRILLQGQDDIEIVGECANAVEAIGAVHKLRPDVLFLDIQMPRISGLEMVGMLDPEHRPYIVFLTAFDEYAIKAFEEHAFDYLLKPIEEKRLEKTLHRLRQERSKQDVSLLPENQQALKFIPCTGHSRIYLLQMDDVAFVSSRMSGVYVTSSEGKEGFTELTLRTLESRTPLLRCHRQFLVNMAHLQEIRLEDNGQAELILRNGLTVPVSRRYLKSLKEAIGL</sequence>
<name>BTSR_SALTY</name>
<feature type="chain" id="PRO_0000081365" description="Transcriptional regulatory protein BtsR">
    <location>
        <begin position="1"/>
        <end position="239"/>
    </location>
</feature>
<feature type="domain" description="Response regulatory" evidence="3">
    <location>
        <begin position="3"/>
        <end position="116"/>
    </location>
</feature>
<feature type="domain" description="HTH LytTR-type" evidence="2">
    <location>
        <begin position="137"/>
        <end position="239"/>
    </location>
</feature>
<feature type="modified residue" description="4-aspartylphosphate" evidence="3">
    <location>
        <position position="54"/>
    </location>
</feature>
<evidence type="ECO:0000250" key="1">
    <source>
        <dbReference type="UniProtKB" id="P0AFT5"/>
    </source>
</evidence>
<evidence type="ECO:0000255" key="2">
    <source>
        <dbReference type="PROSITE-ProRule" id="PRU00112"/>
    </source>
</evidence>
<evidence type="ECO:0000255" key="3">
    <source>
        <dbReference type="PROSITE-ProRule" id="PRU00169"/>
    </source>
</evidence>
<reference key="1">
    <citation type="journal article" date="2001" name="Nature">
        <title>Complete genome sequence of Salmonella enterica serovar Typhimurium LT2.</title>
        <authorList>
            <person name="McClelland M."/>
            <person name="Sanderson K.E."/>
            <person name="Spieth J."/>
            <person name="Clifton S.W."/>
            <person name="Latreille P."/>
            <person name="Courtney L."/>
            <person name="Porwollik S."/>
            <person name="Ali J."/>
            <person name="Dante M."/>
            <person name="Du F."/>
            <person name="Hou S."/>
            <person name="Layman D."/>
            <person name="Leonard S."/>
            <person name="Nguyen C."/>
            <person name="Scott K."/>
            <person name="Holmes A."/>
            <person name="Grewal N."/>
            <person name="Mulvaney E."/>
            <person name="Ryan E."/>
            <person name="Sun H."/>
            <person name="Florea L."/>
            <person name="Miller W."/>
            <person name="Stoneking T."/>
            <person name="Nhan M."/>
            <person name="Waterston R."/>
            <person name="Wilson R.K."/>
        </authorList>
    </citation>
    <scope>NUCLEOTIDE SEQUENCE [LARGE SCALE GENOMIC DNA]</scope>
    <source>
        <strain>LT2 / SGSC1412 / ATCC 700720</strain>
    </source>
</reference>
<protein>
    <recommendedName>
        <fullName evidence="1">Transcriptional regulatory protein BtsR</fullName>
    </recommendedName>
</protein>
<keyword id="KW-0238">DNA-binding</keyword>
<keyword id="KW-0597">Phosphoprotein</keyword>
<keyword id="KW-1185">Reference proteome</keyword>
<keyword id="KW-0804">Transcription</keyword>
<keyword id="KW-0805">Transcription regulation</keyword>
<keyword id="KW-0902">Two-component regulatory system</keyword>
<accession>Q8ZNN2</accession>
<organism>
    <name type="scientific">Salmonella typhimurium (strain LT2 / SGSC1412 / ATCC 700720)</name>
    <dbReference type="NCBI Taxonomy" id="99287"/>
    <lineage>
        <taxon>Bacteria</taxon>
        <taxon>Pseudomonadati</taxon>
        <taxon>Pseudomonadota</taxon>
        <taxon>Gammaproteobacteria</taxon>
        <taxon>Enterobacterales</taxon>
        <taxon>Enterobacteriaceae</taxon>
        <taxon>Salmonella</taxon>
    </lineage>
</organism>